<feature type="chain" id="PRO_0000297474" description="Erythronate-4-phosphate dehydrogenase">
    <location>
        <begin position="1"/>
        <end position="378"/>
    </location>
</feature>
<feature type="active site" evidence="1">
    <location>
        <position position="208"/>
    </location>
</feature>
<feature type="active site" evidence="1">
    <location>
        <position position="237"/>
    </location>
</feature>
<feature type="active site" description="Proton donor" evidence="1">
    <location>
        <position position="254"/>
    </location>
</feature>
<feature type="binding site" evidence="1">
    <location>
        <position position="45"/>
    </location>
    <ligand>
        <name>substrate</name>
    </ligand>
</feature>
<feature type="binding site" evidence="1">
    <location>
        <position position="66"/>
    </location>
    <ligand>
        <name>substrate</name>
    </ligand>
</feature>
<feature type="binding site" evidence="1">
    <location>
        <position position="146"/>
    </location>
    <ligand>
        <name>NAD(+)</name>
        <dbReference type="ChEBI" id="CHEBI:57540"/>
    </ligand>
</feature>
<feature type="binding site" evidence="1">
    <location>
        <position position="175"/>
    </location>
    <ligand>
        <name>NAD(+)</name>
        <dbReference type="ChEBI" id="CHEBI:57540"/>
    </ligand>
</feature>
<feature type="binding site" evidence="1">
    <location>
        <position position="232"/>
    </location>
    <ligand>
        <name>NAD(+)</name>
        <dbReference type="ChEBI" id="CHEBI:57540"/>
    </ligand>
</feature>
<feature type="binding site" evidence="1">
    <location>
        <position position="257"/>
    </location>
    <ligand>
        <name>NAD(+)</name>
        <dbReference type="ChEBI" id="CHEBI:57540"/>
    </ligand>
</feature>
<feature type="binding site" evidence="1">
    <location>
        <position position="258"/>
    </location>
    <ligand>
        <name>substrate</name>
    </ligand>
</feature>
<dbReference type="EC" id="1.1.1.290" evidence="1"/>
<dbReference type="EMBL" id="CP000034">
    <property type="protein sequence ID" value="ABB62589.1"/>
    <property type="molecule type" value="Genomic_DNA"/>
</dbReference>
<dbReference type="RefSeq" id="WP_000699138.1">
    <property type="nucleotide sequence ID" value="NC_007606.1"/>
</dbReference>
<dbReference type="RefSeq" id="YP_404080.1">
    <property type="nucleotide sequence ID" value="NC_007606.1"/>
</dbReference>
<dbReference type="SMR" id="Q32DL6"/>
<dbReference type="STRING" id="300267.SDY_2519"/>
<dbReference type="EnsemblBacteria" id="ABB62589">
    <property type="protein sequence ID" value="ABB62589"/>
    <property type="gene ID" value="SDY_2519"/>
</dbReference>
<dbReference type="KEGG" id="sdy:SDY_2519"/>
<dbReference type="PATRIC" id="fig|300267.13.peg.3034"/>
<dbReference type="HOGENOM" id="CLU_019796_4_0_6"/>
<dbReference type="UniPathway" id="UPA00244">
    <property type="reaction ID" value="UER00310"/>
</dbReference>
<dbReference type="Proteomes" id="UP000002716">
    <property type="component" value="Chromosome"/>
</dbReference>
<dbReference type="GO" id="GO:0005829">
    <property type="term" value="C:cytosol"/>
    <property type="evidence" value="ECO:0007669"/>
    <property type="project" value="TreeGrafter"/>
</dbReference>
<dbReference type="GO" id="GO:0033711">
    <property type="term" value="F:4-phosphoerythronate dehydrogenase activity"/>
    <property type="evidence" value="ECO:0007669"/>
    <property type="project" value="UniProtKB-EC"/>
</dbReference>
<dbReference type="GO" id="GO:0051287">
    <property type="term" value="F:NAD binding"/>
    <property type="evidence" value="ECO:0007669"/>
    <property type="project" value="InterPro"/>
</dbReference>
<dbReference type="GO" id="GO:0046983">
    <property type="term" value="F:protein dimerization activity"/>
    <property type="evidence" value="ECO:0007669"/>
    <property type="project" value="InterPro"/>
</dbReference>
<dbReference type="GO" id="GO:0036001">
    <property type="term" value="P:'de novo' pyridoxal 5'-phosphate biosynthetic process"/>
    <property type="evidence" value="ECO:0007669"/>
    <property type="project" value="TreeGrafter"/>
</dbReference>
<dbReference type="GO" id="GO:0008615">
    <property type="term" value="P:pyridoxine biosynthetic process"/>
    <property type="evidence" value="ECO:0007669"/>
    <property type="project" value="UniProtKB-UniRule"/>
</dbReference>
<dbReference type="CDD" id="cd12158">
    <property type="entry name" value="ErythrP_dh"/>
    <property type="match status" value="1"/>
</dbReference>
<dbReference type="FunFam" id="3.30.1370.170:FF:000001">
    <property type="entry name" value="Erythronate-4-phosphate dehydrogenase"/>
    <property type="match status" value="1"/>
</dbReference>
<dbReference type="FunFam" id="3.40.50.720:FF:000093">
    <property type="entry name" value="Erythronate-4-phosphate dehydrogenase"/>
    <property type="match status" value="1"/>
</dbReference>
<dbReference type="Gene3D" id="3.30.1370.170">
    <property type="match status" value="1"/>
</dbReference>
<dbReference type="Gene3D" id="3.40.50.720">
    <property type="entry name" value="NAD(P)-binding Rossmann-like Domain"/>
    <property type="match status" value="2"/>
</dbReference>
<dbReference type="HAMAP" id="MF_01825">
    <property type="entry name" value="PdxB"/>
    <property type="match status" value="1"/>
</dbReference>
<dbReference type="InterPro" id="IPR006139">
    <property type="entry name" value="D-isomer_2_OHA_DH_cat_dom"/>
</dbReference>
<dbReference type="InterPro" id="IPR029753">
    <property type="entry name" value="D-isomer_DH_CS"/>
</dbReference>
<dbReference type="InterPro" id="IPR029752">
    <property type="entry name" value="D-isomer_DH_CS1"/>
</dbReference>
<dbReference type="InterPro" id="IPR006140">
    <property type="entry name" value="D-isomer_DH_NAD-bd"/>
</dbReference>
<dbReference type="InterPro" id="IPR020921">
    <property type="entry name" value="Erythronate-4-P_DHase"/>
</dbReference>
<dbReference type="InterPro" id="IPR024531">
    <property type="entry name" value="Erythronate-4-P_DHase_dimer"/>
</dbReference>
<dbReference type="InterPro" id="IPR036291">
    <property type="entry name" value="NAD(P)-bd_dom_sf"/>
</dbReference>
<dbReference type="InterPro" id="IPR038251">
    <property type="entry name" value="PdxB_dimer_sf"/>
</dbReference>
<dbReference type="NCBIfam" id="NF001309">
    <property type="entry name" value="PRK00257.1"/>
    <property type="match status" value="1"/>
</dbReference>
<dbReference type="NCBIfam" id="NF011966">
    <property type="entry name" value="PRK15438.1"/>
    <property type="match status" value="1"/>
</dbReference>
<dbReference type="PANTHER" id="PTHR42938">
    <property type="entry name" value="FORMATE DEHYDROGENASE 1"/>
    <property type="match status" value="1"/>
</dbReference>
<dbReference type="PANTHER" id="PTHR42938:SF9">
    <property type="entry name" value="FORMATE DEHYDROGENASE 1"/>
    <property type="match status" value="1"/>
</dbReference>
<dbReference type="Pfam" id="PF00389">
    <property type="entry name" value="2-Hacid_dh"/>
    <property type="match status" value="1"/>
</dbReference>
<dbReference type="Pfam" id="PF02826">
    <property type="entry name" value="2-Hacid_dh_C"/>
    <property type="match status" value="1"/>
</dbReference>
<dbReference type="Pfam" id="PF11890">
    <property type="entry name" value="DUF3410"/>
    <property type="match status" value="1"/>
</dbReference>
<dbReference type="SUPFAM" id="SSF52283">
    <property type="entry name" value="Formate/glycerate dehydrogenase catalytic domain-like"/>
    <property type="match status" value="1"/>
</dbReference>
<dbReference type="SUPFAM" id="SSF51735">
    <property type="entry name" value="NAD(P)-binding Rossmann-fold domains"/>
    <property type="match status" value="1"/>
</dbReference>
<dbReference type="PROSITE" id="PS00065">
    <property type="entry name" value="D_2_HYDROXYACID_DH_1"/>
    <property type="match status" value="1"/>
</dbReference>
<dbReference type="PROSITE" id="PS00671">
    <property type="entry name" value="D_2_HYDROXYACID_DH_3"/>
    <property type="match status" value="1"/>
</dbReference>
<sequence>MKILVDENMPYARDLFSRLGEVTAVPGRPIPVAQLADADALMVRSVTKVNESLLAGKPIKFVGTATAGTDHVDEAWLKQAGIGFSAAPGCNAIAVVEYVFSSLLMLAERDGFSLHERTVGIVGVGNVGRRLQARLEALGIKTLLCDPPRADRGDEGDFRSLDELVQRADILTFHTPLFKDGPYKTLHLADEKLIRSLKPGAILINACRGAVVDNTALLTCLNEGQKLSVVLDVWEGEPELNVELLTKVDIGTPHIAGYTLEGKARGTTQVFEAYSKFIGHKQHVALDTLLPAPEFGRITLHGPLDQPTLKRLVHLVYDVRRDDAPLRKVAGIPGEFDKLRKNYLERREWSSLYVICDDASAASLLCKLGFNAVHHPAR</sequence>
<gene>
    <name evidence="1" type="primary">pdxB</name>
    <name type="ordered locus">SDY_2519</name>
</gene>
<organism>
    <name type="scientific">Shigella dysenteriae serotype 1 (strain Sd197)</name>
    <dbReference type="NCBI Taxonomy" id="300267"/>
    <lineage>
        <taxon>Bacteria</taxon>
        <taxon>Pseudomonadati</taxon>
        <taxon>Pseudomonadota</taxon>
        <taxon>Gammaproteobacteria</taxon>
        <taxon>Enterobacterales</taxon>
        <taxon>Enterobacteriaceae</taxon>
        <taxon>Shigella</taxon>
    </lineage>
</organism>
<proteinExistence type="inferred from homology"/>
<protein>
    <recommendedName>
        <fullName evidence="1">Erythronate-4-phosphate dehydrogenase</fullName>
        <ecNumber evidence="1">1.1.1.290</ecNumber>
    </recommendedName>
</protein>
<accession>Q32DL6</accession>
<reference key="1">
    <citation type="journal article" date="2005" name="Nucleic Acids Res.">
        <title>Genome dynamics and diversity of Shigella species, the etiologic agents of bacillary dysentery.</title>
        <authorList>
            <person name="Yang F."/>
            <person name="Yang J."/>
            <person name="Zhang X."/>
            <person name="Chen L."/>
            <person name="Jiang Y."/>
            <person name="Yan Y."/>
            <person name="Tang X."/>
            <person name="Wang J."/>
            <person name="Xiong Z."/>
            <person name="Dong J."/>
            <person name="Xue Y."/>
            <person name="Zhu Y."/>
            <person name="Xu X."/>
            <person name="Sun L."/>
            <person name="Chen S."/>
            <person name="Nie H."/>
            <person name="Peng J."/>
            <person name="Xu J."/>
            <person name="Wang Y."/>
            <person name="Yuan Z."/>
            <person name="Wen Y."/>
            <person name="Yao Z."/>
            <person name="Shen Y."/>
            <person name="Qiang B."/>
            <person name="Hou Y."/>
            <person name="Yu J."/>
            <person name="Jin Q."/>
        </authorList>
    </citation>
    <scope>NUCLEOTIDE SEQUENCE [LARGE SCALE GENOMIC DNA]</scope>
    <source>
        <strain>Sd197</strain>
    </source>
</reference>
<evidence type="ECO:0000255" key="1">
    <source>
        <dbReference type="HAMAP-Rule" id="MF_01825"/>
    </source>
</evidence>
<comment type="function">
    <text evidence="1">Catalyzes the oxidation of erythronate-4-phosphate to 3-hydroxy-2-oxo-4-phosphonooxybutanoate.</text>
</comment>
<comment type="catalytic activity">
    <reaction evidence="1">
        <text>4-phospho-D-erythronate + NAD(+) = (R)-3-hydroxy-2-oxo-4-phosphooxybutanoate + NADH + H(+)</text>
        <dbReference type="Rhea" id="RHEA:18829"/>
        <dbReference type="ChEBI" id="CHEBI:15378"/>
        <dbReference type="ChEBI" id="CHEBI:57540"/>
        <dbReference type="ChEBI" id="CHEBI:57945"/>
        <dbReference type="ChEBI" id="CHEBI:58538"/>
        <dbReference type="ChEBI" id="CHEBI:58766"/>
        <dbReference type="EC" id="1.1.1.290"/>
    </reaction>
</comment>
<comment type="pathway">
    <text evidence="1">Cofactor biosynthesis; pyridoxine 5'-phosphate biosynthesis; pyridoxine 5'-phosphate from D-erythrose 4-phosphate: step 2/5.</text>
</comment>
<comment type="subunit">
    <text evidence="1">Homodimer.</text>
</comment>
<comment type="subcellular location">
    <subcellularLocation>
        <location evidence="1">Cytoplasm</location>
    </subcellularLocation>
</comment>
<comment type="similarity">
    <text evidence="1">Belongs to the D-isomer specific 2-hydroxyacid dehydrogenase family. PdxB subfamily.</text>
</comment>
<keyword id="KW-0963">Cytoplasm</keyword>
<keyword id="KW-0520">NAD</keyword>
<keyword id="KW-0560">Oxidoreductase</keyword>
<keyword id="KW-0664">Pyridoxine biosynthesis</keyword>
<keyword id="KW-1185">Reference proteome</keyword>
<name>PDXB_SHIDS</name>